<comment type="function">
    <text evidence="1">Catalyzes the decarboxylative condensation of pimeloyl-[acyl-carrier protein] and L-alanine to produce 8-amino-7-oxononanoate (AON), [acyl-carrier protein], and carbon dioxide.</text>
</comment>
<comment type="catalytic activity">
    <reaction evidence="1">
        <text>6-carboxyhexanoyl-[ACP] + L-alanine + H(+) = (8S)-8-amino-7-oxononanoate + holo-[ACP] + CO2</text>
        <dbReference type="Rhea" id="RHEA:42288"/>
        <dbReference type="Rhea" id="RHEA-COMP:9685"/>
        <dbReference type="Rhea" id="RHEA-COMP:9955"/>
        <dbReference type="ChEBI" id="CHEBI:15378"/>
        <dbReference type="ChEBI" id="CHEBI:16526"/>
        <dbReference type="ChEBI" id="CHEBI:57972"/>
        <dbReference type="ChEBI" id="CHEBI:64479"/>
        <dbReference type="ChEBI" id="CHEBI:78846"/>
        <dbReference type="ChEBI" id="CHEBI:149468"/>
        <dbReference type="EC" id="2.3.1.47"/>
    </reaction>
</comment>
<comment type="cofactor">
    <cofactor evidence="1">
        <name>pyridoxal 5'-phosphate</name>
        <dbReference type="ChEBI" id="CHEBI:597326"/>
    </cofactor>
</comment>
<comment type="pathway">
    <text evidence="1">Cofactor biosynthesis; biotin biosynthesis.</text>
</comment>
<comment type="subunit">
    <text evidence="1">Homodimer.</text>
</comment>
<comment type="similarity">
    <text evidence="1">Belongs to the class-II pyridoxal-phosphate-dependent aminotransferase family. BioF subfamily.</text>
</comment>
<dbReference type="EC" id="2.3.1.47" evidence="1"/>
<dbReference type="EMBL" id="CP000010">
    <property type="protein sequence ID" value="AAU48655.1"/>
    <property type="molecule type" value="Genomic_DNA"/>
</dbReference>
<dbReference type="RefSeq" id="WP_004189736.1">
    <property type="nucleotide sequence ID" value="NC_006348.1"/>
</dbReference>
<dbReference type="RefSeq" id="YP_101946.1">
    <property type="nucleotide sequence ID" value="NC_006348.1"/>
</dbReference>
<dbReference type="SMR" id="Q62MX1"/>
<dbReference type="GeneID" id="93058884"/>
<dbReference type="KEGG" id="bma:BMA0101"/>
<dbReference type="PATRIC" id="fig|243160.12.peg.100"/>
<dbReference type="eggNOG" id="COG0156">
    <property type="taxonomic scope" value="Bacteria"/>
</dbReference>
<dbReference type="HOGENOM" id="CLU_015846_11_2_4"/>
<dbReference type="UniPathway" id="UPA00078"/>
<dbReference type="Proteomes" id="UP000006693">
    <property type="component" value="Chromosome 1"/>
</dbReference>
<dbReference type="GO" id="GO:0008710">
    <property type="term" value="F:8-amino-7-oxononanoate synthase activity"/>
    <property type="evidence" value="ECO:0007669"/>
    <property type="project" value="UniProtKB-UniRule"/>
</dbReference>
<dbReference type="GO" id="GO:0030170">
    <property type="term" value="F:pyridoxal phosphate binding"/>
    <property type="evidence" value="ECO:0007669"/>
    <property type="project" value="UniProtKB-UniRule"/>
</dbReference>
<dbReference type="GO" id="GO:0009102">
    <property type="term" value="P:biotin biosynthetic process"/>
    <property type="evidence" value="ECO:0007669"/>
    <property type="project" value="UniProtKB-UniRule"/>
</dbReference>
<dbReference type="Gene3D" id="3.90.1150.10">
    <property type="entry name" value="Aspartate Aminotransferase, domain 1"/>
    <property type="match status" value="1"/>
</dbReference>
<dbReference type="Gene3D" id="3.40.640.10">
    <property type="entry name" value="Type I PLP-dependent aspartate aminotransferase-like (Major domain)"/>
    <property type="match status" value="1"/>
</dbReference>
<dbReference type="HAMAP" id="MF_01693">
    <property type="entry name" value="BioF_aminotrans_2"/>
    <property type="match status" value="1"/>
</dbReference>
<dbReference type="InterPro" id="IPR004839">
    <property type="entry name" value="Aminotransferase_I/II_large"/>
</dbReference>
<dbReference type="InterPro" id="IPR050087">
    <property type="entry name" value="AON_synthase_class-II"/>
</dbReference>
<dbReference type="InterPro" id="IPR004723">
    <property type="entry name" value="AONS_Archaea/Proteobacteria"/>
</dbReference>
<dbReference type="InterPro" id="IPR022834">
    <property type="entry name" value="AONS_Proteobacteria"/>
</dbReference>
<dbReference type="InterPro" id="IPR015424">
    <property type="entry name" value="PyrdxlP-dep_Trfase"/>
</dbReference>
<dbReference type="InterPro" id="IPR015421">
    <property type="entry name" value="PyrdxlP-dep_Trfase_major"/>
</dbReference>
<dbReference type="InterPro" id="IPR015422">
    <property type="entry name" value="PyrdxlP-dep_Trfase_small"/>
</dbReference>
<dbReference type="NCBIfam" id="TIGR00858">
    <property type="entry name" value="bioF"/>
    <property type="match status" value="1"/>
</dbReference>
<dbReference type="PANTHER" id="PTHR13693:SF100">
    <property type="entry name" value="8-AMINO-7-OXONONANOATE SYNTHASE"/>
    <property type="match status" value="1"/>
</dbReference>
<dbReference type="PANTHER" id="PTHR13693">
    <property type="entry name" value="CLASS II AMINOTRANSFERASE/8-AMINO-7-OXONONANOATE SYNTHASE"/>
    <property type="match status" value="1"/>
</dbReference>
<dbReference type="Pfam" id="PF00155">
    <property type="entry name" value="Aminotran_1_2"/>
    <property type="match status" value="1"/>
</dbReference>
<dbReference type="SUPFAM" id="SSF53383">
    <property type="entry name" value="PLP-dependent transferases"/>
    <property type="match status" value="1"/>
</dbReference>
<gene>
    <name evidence="1" type="primary">bioF</name>
    <name type="ordered locus">BMA0101</name>
</gene>
<reference key="1">
    <citation type="journal article" date="2004" name="Proc. Natl. Acad. Sci. U.S.A.">
        <title>Structural flexibility in the Burkholderia mallei genome.</title>
        <authorList>
            <person name="Nierman W.C."/>
            <person name="DeShazer D."/>
            <person name="Kim H.S."/>
            <person name="Tettelin H."/>
            <person name="Nelson K.E."/>
            <person name="Feldblyum T.V."/>
            <person name="Ulrich R.L."/>
            <person name="Ronning C.M."/>
            <person name="Brinkac L.M."/>
            <person name="Daugherty S.C."/>
            <person name="Davidsen T.D."/>
            <person name="DeBoy R.T."/>
            <person name="Dimitrov G."/>
            <person name="Dodson R.J."/>
            <person name="Durkin A.S."/>
            <person name="Gwinn M.L."/>
            <person name="Haft D.H."/>
            <person name="Khouri H.M."/>
            <person name="Kolonay J.F."/>
            <person name="Madupu R."/>
            <person name="Mohammoud Y."/>
            <person name="Nelson W.C."/>
            <person name="Radune D."/>
            <person name="Romero C.M."/>
            <person name="Sarria S."/>
            <person name="Selengut J."/>
            <person name="Shamblin C."/>
            <person name="Sullivan S.A."/>
            <person name="White O."/>
            <person name="Yu Y."/>
            <person name="Zafar N."/>
            <person name="Zhou L."/>
            <person name="Fraser C.M."/>
        </authorList>
    </citation>
    <scope>NUCLEOTIDE SEQUENCE [LARGE SCALE GENOMIC DNA]</scope>
    <source>
        <strain>ATCC 23344</strain>
    </source>
</reference>
<name>BIOF_BURMA</name>
<sequence length="394" mass="40699">MNPLATLEQGLADIDAQGLRRCRRVADTACGAHMTVDGRAIIGFASNDYLGLAAHPRLVEAFAEGARRYGSGSGGSHLLGGHSRAHATLEDELAAFSGGFSDAPRALYFSTGYMANLAALTALAGRGATIFSDALNHASLIDGARLSRANVQIYPHGDADALDARLRACDAPTKLIVSDTVFSMDGDVAPLARLVALAETHGAWLVVDDAHGFGVLGPQGRGALAAHGLRSPNLVYVGTLGKAAGVAGAFVVAHETVIEWLVQRARSYIFTTAAPPSVACAVSASLAVIASDEGDARRAHLGALIKRTRAILRATHWQPVDSHTAVQPLVIGSNEATLAAMAALDAQGLWVPAIRPPTVPAGTSRLRISLSAAHSFDDLARLEAALVTPIGAAA</sequence>
<proteinExistence type="inferred from homology"/>
<protein>
    <recommendedName>
        <fullName evidence="1">8-amino-7-oxononanoate synthase</fullName>
        <shortName evidence="1">AONS</shortName>
        <ecNumber evidence="1">2.3.1.47</ecNumber>
    </recommendedName>
    <alternativeName>
        <fullName evidence="1">7-keto-8-amino-pelargonic acid synthase</fullName>
        <shortName evidence="1">7-KAP synthase</shortName>
        <shortName evidence="1">KAPA synthase</shortName>
    </alternativeName>
    <alternativeName>
        <fullName evidence="1">8-amino-7-ketopelargonate synthase</fullName>
    </alternativeName>
</protein>
<feature type="chain" id="PRO_0000380936" description="8-amino-7-oxononanoate synthase">
    <location>
        <begin position="1"/>
        <end position="394"/>
    </location>
</feature>
<feature type="binding site" evidence="1">
    <location>
        <position position="21"/>
    </location>
    <ligand>
        <name>substrate</name>
    </ligand>
</feature>
<feature type="binding site" evidence="1">
    <location>
        <begin position="112"/>
        <end position="113"/>
    </location>
    <ligand>
        <name>pyridoxal 5'-phosphate</name>
        <dbReference type="ChEBI" id="CHEBI:597326"/>
    </ligand>
</feature>
<feature type="binding site" evidence="1">
    <location>
        <position position="137"/>
    </location>
    <ligand>
        <name>substrate</name>
    </ligand>
</feature>
<feature type="binding site" evidence="1">
    <location>
        <position position="183"/>
    </location>
    <ligand>
        <name>pyridoxal 5'-phosphate</name>
        <dbReference type="ChEBI" id="CHEBI:597326"/>
    </ligand>
</feature>
<feature type="binding site" evidence="1">
    <location>
        <position position="211"/>
    </location>
    <ligand>
        <name>pyridoxal 5'-phosphate</name>
        <dbReference type="ChEBI" id="CHEBI:597326"/>
    </ligand>
</feature>
<feature type="binding site" evidence="1">
    <location>
        <position position="239"/>
    </location>
    <ligand>
        <name>pyridoxal 5'-phosphate</name>
        <dbReference type="ChEBI" id="CHEBI:597326"/>
    </ligand>
</feature>
<feature type="binding site" evidence="1">
    <location>
        <position position="358"/>
    </location>
    <ligand>
        <name>substrate</name>
    </ligand>
</feature>
<feature type="modified residue" description="N6-(pyridoxal phosphate)lysine" evidence="1">
    <location>
        <position position="242"/>
    </location>
</feature>
<accession>Q62MX1</accession>
<evidence type="ECO:0000255" key="1">
    <source>
        <dbReference type="HAMAP-Rule" id="MF_01693"/>
    </source>
</evidence>
<organism>
    <name type="scientific">Burkholderia mallei (strain ATCC 23344)</name>
    <dbReference type="NCBI Taxonomy" id="243160"/>
    <lineage>
        <taxon>Bacteria</taxon>
        <taxon>Pseudomonadati</taxon>
        <taxon>Pseudomonadota</taxon>
        <taxon>Betaproteobacteria</taxon>
        <taxon>Burkholderiales</taxon>
        <taxon>Burkholderiaceae</taxon>
        <taxon>Burkholderia</taxon>
        <taxon>pseudomallei group</taxon>
    </lineage>
</organism>
<keyword id="KW-0093">Biotin biosynthesis</keyword>
<keyword id="KW-0663">Pyridoxal phosphate</keyword>
<keyword id="KW-1185">Reference proteome</keyword>
<keyword id="KW-0808">Transferase</keyword>